<comment type="function">
    <text>Mitochondrial membrane ATP synthase (F(1)F(0) ATP synthase or Complex V) produces ATP from ADP in the presence of a proton gradient across the membrane which is generated by electron transport complexes of the respiratory chain. F-type ATPases consist of two structural domains, F(1) - containing the extramembraneous catalytic core and F(0) - containing the membrane proton channel, linked together by a central stalk and a peripheral stalk. During catalysis, ATP synthesis in the catalytic domain of F(1) is coupled via a rotary mechanism of the central stalk subunits to proton translocation. Key component of the proton channel; it may play a direct role in the translocation of protons across the membrane.</text>
</comment>
<comment type="subunit">
    <text evidence="2">F-type ATPases have 2 components, CF(1) - the catalytic core - and CF(0) - the membrane proton channel. CF(1) has five subunits: alpha(3), beta(3), gamma(1), delta(1), epsilon(1). CF(0) has three main subunits: a, b and c.</text>
</comment>
<comment type="subcellular location">
    <subcellularLocation>
        <location>Mitochondrion inner membrane</location>
        <topology>Multi-pass membrane protein</topology>
    </subcellularLocation>
</comment>
<comment type="similarity">
    <text evidence="1">Belongs to the ATPase A chain family.</text>
</comment>
<gene>
    <name type="primary">mt:ATPase6</name>
</gene>
<organism>
    <name type="scientific">Aedes albopictus</name>
    <name type="common">Asian tiger mosquito</name>
    <name type="synonym">Stegomyia albopicta</name>
    <dbReference type="NCBI Taxonomy" id="7160"/>
    <lineage>
        <taxon>Eukaryota</taxon>
        <taxon>Metazoa</taxon>
        <taxon>Ecdysozoa</taxon>
        <taxon>Arthropoda</taxon>
        <taxon>Hexapoda</taxon>
        <taxon>Insecta</taxon>
        <taxon>Pterygota</taxon>
        <taxon>Neoptera</taxon>
        <taxon>Endopterygota</taxon>
        <taxon>Diptera</taxon>
        <taxon>Nematocera</taxon>
        <taxon>Culicoidea</taxon>
        <taxon>Culicidae</taxon>
        <taxon>Culicinae</taxon>
        <taxon>Aedini</taxon>
        <taxon>Aedes</taxon>
        <taxon>Stegomyia</taxon>
    </lineage>
</organism>
<name>ATP6_AEDAL</name>
<geneLocation type="mitochondrion" evidence="3"/>
<evidence type="ECO:0000255" key="1"/>
<evidence type="ECO:0000305" key="2"/>
<evidence type="ECO:0000312" key="3">
    <source>
        <dbReference type="EMBL" id="AAL61976.1"/>
    </source>
</evidence>
<accession>Q5JCK5</accession>
<keyword id="KW-0066">ATP synthesis</keyword>
<keyword id="KW-0138">CF(0)</keyword>
<keyword id="KW-0375">Hydrogen ion transport</keyword>
<keyword id="KW-0406">Ion transport</keyword>
<keyword id="KW-0472">Membrane</keyword>
<keyword id="KW-0496">Mitochondrion</keyword>
<keyword id="KW-0999">Mitochondrion inner membrane</keyword>
<keyword id="KW-0812">Transmembrane</keyword>
<keyword id="KW-1133">Transmembrane helix</keyword>
<keyword id="KW-0813">Transport</keyword>
<proteinExistence type="inferred from homology"/>
<reference evidence="3" key="1">
    <citation type="submission" date="2001-12" db="EMBL/GenBank/DDBJ databases">
        <authorList>
            <person name="Ho C.-M."/>
            <person name="Chang H.-P."/>
            <person name="Liu Y.-M."/>
        </authorList>
    </citation>
    <scope>NUCLEOTIDE SEQUENCE [GENOMIC DNA]</scope>
</reference>
<feature type="chain" id="PRO_0000233910" description="ATP synthase subunit a">
    <location>
        <begin position="1"/>
        <end position="226"/>
    </location>
</feature>
<feature type="transmembrane region" description="Helical" evidence="1">
    <location>
        <begin position="20"/>
        <end position="40"/>
    </location>
</feature>
<feature type="transmembrane region" description="Helical" evidence="1">
    <location>
        <begin position="74"/>
        <end position="94"/>
    </location>
</feature>
<feature type="transmembrane region" description="Helical" evidence="1">
    <location>
        <begin position="100"/>
        <end position="120"/>
    </location>
</feature>
<feature type="transmembrane region" description="Helical" evidence="1">
    <location>
        <begin position="162"/>
        <end position="182"/>
    </location>
</feature>
<feature type="transmembrane region" description="Helical" evidence="1">
    <location>
        <begin position="187"/>
        <end position="207"/>
    </location>
</feature>
<sequence length="226" mass="25442">MMTNLFSVFDPSTTIFNMSLNWFSTFIGLLIIPSTFWLMPNRFQIIWNNILLTLHKEFKTLLGPNGHNGSTLMFVSLFSLIMFNNFLGLFPYIFTSTSHLTLTLTLAFPLWLSFMLYGWICHTQHMFAHLVPQGTPPMLMPFMVCIKTISNVIRPGTLAVRLTANMIAGHLLMTLLGNTGPMSTSYIILSMILITQIALLVLESAVAIIQSYVFAVLSTLYSSEVN</sequence>
<dbReference type="EMBL" id="AY072044">
    <property type="protein sequence ID" value="AAL61976.1"/>
    <property type="molecule type" value="Genomic_DNA"/>
</dbReference>
<dbReference type="SMR" id="Q5JCK5"/>
<dbReference type="KEGG" id="aalb:3260119"/>
<dbReference type="CTD" id="4508"/>
<dbReference type="VEuPathDB" id="VectorBase:AALC636_031151"/>
<dbReference type="OrthoDB" id="10068504at2759"/>
<dbReference type="Proteomes" id="UP000069940">
    <property type="component" value="Unplaced"/>
</dbReference>
<dbReference type="GO" id="GO:0005743">
    <property type="term" value="C:mitochondrial inner membrane"/>
    <property type="evidence" value="ECO:0007669"/>
    <property type="project" value="UniProtKB-SubCell"/>
</dbReference>
<dbReference type="GO" id="GO:0045259">
    <property type="term" value="C:proton-transporting ATP synthase complex"/>
    <property type="evidence" value="ECO:0007669"/>
    <property type="project" value="UniProtKB-KW"/>
</dbReference>
<dbReference type="GO" id="GO:0046933">
    <property type="term" value="F:proton-transporting ATP synthase activity, rotational mechanism"/>
    <property type="evidence" value="ECO:0007669"/>
    <property type="project" value="TreeGrafter"/>
</dbReference>
<dbReference type="CDD" id="cd00310">
    <property type="entry name" value="ATP-synt_Fo_a_6"/>
    <property type="match status" value="1"/>
</dbReference>
<dbReference type="FunFam" id="1.20.120.220:FF:000008">
    <property type="entry name" value="ATP synthase subunit a"/>
    <property type="match status" value="1"/>
</dbReference>
<dbReference type="Gene3D" id="1.20.120.220">
    <property type="entry name" value="ATP synthase, F0 complex, subunit A"/>
    <property type="match status" value="1"/>
</dbReference>
<dbReference type="InterPro" id="IPR000568">
    <property type="entry name" value="ATP_synth_F0_asu"/>
</dbReference>
<dbReference type="InterPro" id="IPR023011">
    <property type="entry name" value="ATP_synth_F0_asu_AS"/>
</dbReference>
<dbReference type="InterPro" id="IPR045083">
    <property type="entry name" value="ATP_synth_F0_asu_bact/mt"/>
</dbReference>
<dbReference type="InterPro" id="IPR035908">
    <property type="entry name" value="F0_ATP_A_sf"/>
</dbReference>
<dbReference type="NCBIfam" id="TIGR01131">
    <property type="entry name" value="ATP_synt_6_or_A"/>
    <property type="match status" value="1"/>
</dbReference>
<dbReference type="PANTHER" id="PTHR11410">
    <property type="entry name" value="ATP SYNTHASE SUBUNIT A"/>
    <property type="match status" value="1"/>
</dbReference>
<dbReference type="PANTHER" id="PTHR11410:SF0">
    <property type="entry name" value="ATP SYNTHASE SUBUNIT A"/>
    <property type="match status" value="1"/>
</dbReference>
<dbReference type="Pfam" id="PF00119">
    <property type="entry name" value="ATP-synt_A"/>
    <property type="match status" value="1"/>
</dbReference>
<dbReference type="PRINTS" id="PR00123">
    <property type="entry name" value="ATPASEA"/>
</dbReference>
<dbReference type="SUPFAM" id="SSF81336">
    <property type="entry name" value="F1F0 ATP synthase subunit A"/>
    <property type="match status" value="1"/>
</dbReference>
<dbReference type="PROSITE" id="PS00449">
    <property type="entry name" value="ATPASE_A"/>
    <property type="match status" value="1"/>
</dbReference>
<protein>
    <recommendedName>
        <fullName>ATP synthase subunit a</fullName>
    </recommendedName>
    <alternativeName>
        <fullName>F-ATPase protein 6</fullName>
    </alternativeName>
</protein>